<protein>
    <recommendedName>
        <fullName evidence="1">Lipoprotein LpqB</fullName>
    </recommendedName>
</protein>
<comment type="subcellular location">
    <subcellularLocation>
        <location evidence="1">Cell membrane</location>
        <topology evidence="1">Lipid-anchor</topology>
    </subcellularLocation>
</comment>
<comment type="similarity">
    <text evidence="1">Belongs to the LpqB lipoprotein family.</text>
</comment>
<sequence>MGRKLLGLLMLAVLLAGCAGVPSSSAPQAIGTVERPAPSNLPKPTPGMDPDVLLREFLKATADPANRHLAARQFLTQSASNAWDDAGSALLIDHVVFVETRAAERVSATMRADILGSLSDMGVFETAEGVLPDPGPIELVKTSGGWRIDRLPNGVFLDWQQFQATYKRNTLYFADPTGKTVVPDPRYVAVPDHDQLATELVSKLIAGPRPEMAHTVRNLLAPPLRLRGPVTRADGGKSGIGRGYGGARIDLEKLSTTDPHSRQLVAAQIIWTLARADIRGPYVINADGAPLDDRFRDGWTTSDVAATDPGVADGAGAGLHALVNGSLVSLDGQHTVVVPGAFGRMGDQTGAALSRNGRQVASVVTLHRGAPDMAASLWIGDLGAEAVQSADGHSLSRPTWSLDDVVWVVVDGNNVLRAIQEPASGQPARLPVDSVAVATRFPGPITDLQLSRDSTRAAMVIGGQVILASVEQTQAGQYALTYPRRLGFGLGNSVVSLSWRTGDDIVVTRTDSSHPVSYVNLDGVNSDAPPHGVQMPVTTVVANPSTAYVAGPQGVLQYSPSADGQQGWSEVPGLTVPGAAPVLPG</sequence>
<feature type="signal peptide" evidence="1">
    <location>
        <begin position="1"/>
        <end position="17"/>
    </location>
</feature>
<feature type="chain" id="PRO_0000286721" description="Lipoprotein LpqB">
    <location>
        <begin position="18"/>
        <end position="585"/>
    </location>
</feature>
<feature type="region of interest" description="Disordered" evidence="2">
    <location>
        <begin position="24"/>
        <end position="48"/>
    </location>
</feature>
<feature type="region of interest" description="Disordered" evidence="2">
    <location>
        <begin position="560"/>
        <end position="585"/>
    </location>
</feature>
<feature type="lipid moiety-binding region" description="N-palmitoyl cysteine" evidence="1">
    <location>
        <position position="18"/>
    </location>
</feature>
<feature type="lipid moiety-binding region" description="S-diacylglycerol cysteine" evidence="1">
    <location>
        <position position="18"/>
    </location>
</feature>
<evidence type="ECO:0000255" key="1">
    <source>
        <dbReference type="HAMAP-Rule" id="MF_01373"/>
    </source>
</evidence>
<evidence type="ECO:0000256" key="2">
    <source>
        <dbReference type="SAM" id="MobiDB-lite"/>
    </source>
</evidence>
<gene>
    <name evidence="1" type="primary">lpqB</name>
    <name type="ordered locus">MAP_3358c</name>
</gene>
<keyword id="KW-1003">Cell membrane</keyword>
<keyword id="KW-0449">Lipoprotein</keyword>
<keyword id="KW-0472">Membrane</keyword>
<keyword id="KW-0564">Palmitate</keyword>
<keyword id="KW-1185">Reference proteome</keyword>
<keyword id="KW-0732">Signal</keyword>
<organism>
    <name type="scientific">Mycolicibacterium paratuberculosis (strain ATCC BAA-968 / K-10)</name>
    <name type="common">Mycobacterium paratuberculosis</name>
    <dbReference type="NCBI Taxonomy" id="262316"/>
    <lineage>
        <taxon>Bacteria</taxon>
        <taxon>Bacillati</taxon>
        <taxon>Actinomycetota</taxon>
        <taxon>Actinomycetes</taxon>
        <taxon>Mycobacteriales</taxon>
        <taxon>Mycobacteriaceae</taxon>
        <taxon>Mycobacterium</taxon>
        <taxon>Mycobacterium avium complex (MAC)</taxon>
    </lineage>
</organism>
<name>LPQB_MYCPA</name>
<accession>Q73UK8</accession>
<reference key="1">
    <citation type="journal article" date="2005" name="Proc. Natl. Acad. Sci. U.S.A.">
        <title>The complete genome sequence of Mycobacterium avium subspecies paratuberculosis.</title>
        <authorList>
            <person name="Li L."/>
            <person name="Bannantine J.P."/>
            <person name="Zhang Q."/>
            <person name="Amonsin A."/>
            <person name="May B.J."/>
            <person name="Alt D."/>
            <person name="Banerji N."/>
            <person name="Kanjilal S."/>
            <person name="Kapur V."/>
        </authorList>
    </citation>
    <scope>NUCLEOTIDE SEQUENCE [LARGE SCALE GENOMIC DNA]</scope>
    <source>
        <strain>ATCC BAA-968 / K-10</strain>
    </source>
</reference>
<proteinExistence type="inferred from homology"/>
<dbReference type="EMBL" id="AE016958">
    <property type="protein sequence ID" value="AAS05908.1"/>
    <property type="molecule type" value="Genomic_DNA"/>
</dbReference>
<dbReference type="RefSeq" id="WP_003878942.1">
    <property type="nucleotide sequence ID" value="NZ_CP106873.1"/>
</dbReference>
<dbReference type="SMR" id="Q73UK8"/>
<dbReference type="STRING" id="262316.MAP_3358c"/>
<dbReference type="KEGG" id="mpa:MAP_3358c"/>
<dbReference type="PATRIC" id="fig|262316.17.peg.3570"/>
<dbReference type="eggNOG" id="COG5401">
    <property type="taxonomic scope" value="Bacteria"/>
</dbReference>
<dbReference type="HOGENOM" id="CLU_032207_1_0_11"/>
<dbReference type="Proteomes" id="UP000000580">
    <property type="component" value="Chromosome"/>
</dbReference>
<dbReference type="GO" id="GO:0005886">
    <property type="term" value="C:plasma membrane"/>
    <property type="evidence" value="ECO:0007669"/>
    <property type="project" value="UniProtKB-SubCell"/>
</dbReference>
<dbReference type="HAMAP" id="MF_01373">
    <property type="entry name" value="LpqB_lipoprot"/>
    <property type="match status" value="1"/>
</dbReference>
<dbReference type="InterPro" id="IPR019606">
    <property type="entry name" value="GerMN"/>
</dbReference>
<dbReference type="InterPro" id="IPR023959">
    <property type="entry name" value="Lipoprotein_LpqB"/>
</dbReference>
<dbReference type="InterPro" id="IPR018910">
    <property type="entry name" value="Lipoprotein_LpqB_C"/>
</dbReference>
<dbReference type="NCBIfam" id="NF010141">
    <property type="entry name" value="PRK13616.1"/>
    <property type="match status" value="1"/>
</dbReference>
<dbReference type="Pfam" id="PF10646">
    <property type="entry name" value="Germane"/>
    <property type="match status" value="1"/>
</dbReference>
<dbReference type="Pfam" id="PF10647">
    <property type="entry name" value="Gmad1"/>
    <property type="match status" value="1"/>
</dbReference>
<dbReference type="SMART" id="SM00909">
    <property type="entry name" value="Germane"/>
    <property type="match status" value="1"/>
</dbReference>
<dbReference type="PROSITE" id="PS51257">
    <property type="entry name" value="PROKAR_LIPOPROTEIN"/>
    <property type="match status" value="1"/>
</dbReference>